<evidence type="ECO:0000255" key="1">
    <source>
        <dbReference type="HAMAP-Rule" id="MF_00326"/>
    </source>
</evidence>
<evidence type="ECO:0000305" key="2"/>
<gene>
    <name evidence="1" type="primary">rpl7ae</name>
    <name type="ordered locus">Smar_0825</name>
</gene>
<organism>
    <name type="scientific">Staphylothermus marinus (strain ATCC 43588 / DSM 3639 / JCM 9404 / F1)</name>
    <dbReference type="NCBI Taxonomy" id="399550"/>
    <lineage>
        <taxon>Archaea</taxon>
        <taxon>Thermoproteota</taxon>
        <taxon>Thermoprotei</taxon>
        <taxon>Desulfurococcales</taxon>
        <taxon>Desulfurococcaceae</taxon>
        <taxon>Staphylothermus</taxon>
    </lineage>
</organism>
<dbReference type="EMBL" id="CP000575">
    <property type="protein sequence ID" value="ABN69926.1"/>
    <property type="molecule type" value="Genomic_DNA"/>
</dbReference>
<dbReference type="RefSeq" id="WP_011839117.1">
    <property type="nucleotide sequence ID" value="NC_009033.1"/>
</dbReference>
<dbReference type="SMR" id="A3DMR6"/>
<dbReference type="STRING" id="399550.Smar_0825"/>
<dbReference type="GeneID" id="4907603"/>
<dbReference type="KEGG" id="smr:Smar_0825"/>
<dbReference type="eggNOG" id="arCOG01751">
    <property type="taxonomic scope" value="Archaea"/>
</dbReference>
<dbReference type="HOGENOM" id="CLU_084513_4_0_2"/>
<dbReference type="OrthoDB" id="25810at2157"/>
<dbReference type="Proteomes" id="UP000000254">
    <property type="component" value="Chromosome"/>
</dbReference>
<dbReference type="GO" id="GO:0005737">
    <property type="term" value="C:cytoplasm"/>
    <property type="evidence" value="ECO:0007669"/>
    <property type="project" value="UniProtKB-SubCell"/>
</dbReference>
<dbReference type="GO" id="GO:1990904">
    <property type="term" value="C:ribonucleoprotein complex"/>
    <property type="evidence" value="ECO:0007669"/>
    <property type="project" value="UniProtKB-KW"/>
</dbReference>
<dbReference type="GO" id="GO:0005840">
    <property type="term" value="C:ribosome"/>
    <property type="evidence" value="ECO:0007669"/>
    <property type="project" value="UniProtKB-KW"/>
</dbReference>
<dbReference type="GO" id="GO:0004526">
    <property type="term" value="F:ribonuclease P activity"/>
    <property type="evidence" value="ECO:0007669"/>
    <property type="project" value="UniProtKB-UniRule"/>
</dbReference>
<dbReference type="GO" id="GO:0019843">
    <property type="term" value="F:rRNA binding"/>
    <property type="evidence" value="ECO:0007669"/>
    <property type="project" value="UniProtKB-KW"/>
</dbReference>
<dbReference type="GO" id="GO:0003735">
    <property type="term" value="F:structural constituent of ribosome"/>
    <property type="evidence" value="ECO:0007669"/>
    <property type="project" value="InterPro"/>
</dbReference>
<dbReference type="GO" id="GO:0042254">
    <property type="term" value="P:ribosome biogenesis"/>
    <property type="evidence" value="ECO:0007669"/>
    <property type="project" value="InterPro"/>
</dbReference>
<dbReference type="GO" id="GO:0006412">
    <property type="term" value="P:translation"/>
    <property type="evidence" value="ECO:0007669"/>
    <property type="project" value="UniProtKB-UniRule"/>
</dbReference>
<dbReference type="GO" id="GO:0001682">
    <property type="term" value="P:tRNA 5'-leader removal"/>
    <property type="evidence" value="ECO:0007669"/>
    <property type="project" value="UniProtKB-UniRule"/>
</dbReference>
<dbReference type="FunFam" id="3.30.1330.30:FF:000020">
    <property type="entry name" value="50S ribosomal protein L7Ae"/>
    <property type="match status" value="1"/>
</dbReference>
<dbReference type="Gene3D" id="3.30.1330.30">
    <property type="match status" value="1"/>
</dbReference>
<dbReference type="HAMAP" id="MF_00326">
    <property type="entry name" value="Ribosomal_eL8"/>
    <property type="match status" value="1"/>
</dbReference>
<dbReference type="InterPro" id="IPR050257">
    <property type="entry name" value="eL8/uL1-like"/>
</dbReference>
<dbReference type="InterPro" id="IPR029064">
    <property type="entry name" value="Ribosomal_eL30-like_sf"/>
</dbReference>
<dbReference type="InterPro" id="IPR004037">
    <property type="entry name" value="Ribosomal_eL8-like_CS"/>
</dbReference>
<dbReference type="InterPro" id="IPR004038">
    <property type="entry name" value="Ribosomal_eL8/eL30/eS12/Gad45"/>
</dbReference>
<dbReference type="InterPro" id="IPR018492">
    <property type="entry name" value="Ribosomal_eL8/Nhp2"/>
</dbReference>
<dbReference type="InterPro" id="IPR022481">
    <property type="entry name" value="Ribosomal_eL8_arc"/>
</dbReference>
<dbReference type="NCBIfam" id="TIGR03677">
    <property type="entry name" value="eL8_ribo"/>
    <property type="match status" value="1"/>
</dbReference>
<dbReference type="PANTHER" id="PTHR23105">
    <property type="entry name" value="RIBOSOMAL PROTEIN L7AE FAMILY MEMBER"/>
    <property type="match status" value="1"/>
</dbReference>
<dbReference type="Pfam" id="PF01248">
    <property type="entry name" value="Ribosomal_L7Ae"/>
    <property type="match status" value="1"/>
</dbReference>
<dbReference type="PRINTS" id="PR00881">
    <property type="entry name" value="L7ARS6FAMILY"/>
</dbReference>
<dbReference type="PRINTS" id="PR00884">
    <property type="entry name" value="RIBOSOMALHS6"/>
</dbReference>
<dbReference type="SUPFAM" id="SSF55315">
    <property type="entry name" value="L30e-like"/>
    <property type="match status" value="1"/>
</dbReference>
<dbReference type="PROSITE" id="PS01082">
    <property type="entry name" value="RIBOSOMAL_L7AE"/>
    <property type="match status" value="1"/>
</dbReference>
<name>RL7A_STAMF</name>
<comment type="function">
    <text evidence="1">Multifunctional RNA-binding protein that recognizes the K-turn motif in ribosomal RNA, the RNA component of RNase P, box H/ACA, box C/D and box C'/D' sRNAs.</text>
</comment>
<comment type="subunit">
    <text evidence="1">Part of the 50S ribosomal subunit. Probably part of the RNase P complex.</text>
</comment>
<comment type="subcellular location">
    <subcellularLocation>
        <location evidence="1">Cytoplasm</location>
    </subcellularLocation>
</comment>
<comment type="similarity">
    <text evidence="1">Belongs to the eukaryotic ribosomal protein eL8 family.</text>
</comment>
<reference key="1">
    <citation type="journal article" date="2009" name="BMC Genomics">
        <title>The complete genome sequence of Staphylothermus marinus reveals differences in sulfur metabolism among heterotrophic Crenarchaeota.</title>
        <authorList>
            <person name="Anderson I.J."/>
            <person name="Dharmarajan L."/>
            <person name="Rodriguez J."/>
            <person name="Hooper S."/>
            <person name="Porat I."/>
            <person name="Ulrich L.E."/>
            <person name="Elkins J.G."/>
            <person name="Mavromatis K."/>
            <person name="Sun H."/>
            <person name="Land M."/>
            <person name="Lapidus A."/>
            <person name="Lucas S."/>
            <person name="Barry K."/>
            <person name="Huber H."/>
            <person name="Zhulin I.B."/>
            <person name="Whitman W.B."/>
            <person name="Mukhopadhyay B."/>
            <person name="Woese C."/>
            <person name="Bristow J."/>
            <person name="Kyrpides N."/>
        </authorList>
    </citation>
    <scope>NUCLEOTIDE SEQUENCE [LARGE SCALE GENOMIC DNA]</scope>
    <source>
        <strain>ATCC 43588 / DSM 3639 / JCM 9404 / F1</strain>
    </source>
</reference>
<reference key="2">
    <citation type="journal article" date="2009" name="Stand. Genomic Sci.">
        <title>Complete genome sequence of Staphylothermus marinus Stetter and Fiala 1986 type strain F1.</title>
        <authorList>
            <person name="Anderson I.J."/>
            <person name="Sun H."/>
            <person name="Lapidus A."/>
            <person name="Copeland A."/>
            <person name="Glavina Del Rio T."/>
            <person name="Tice H."/>
            <person name="Dalin E."/>
            <person name="Lucas S."/>
            <person name="Barry K."/>
            <person name="Land M."/>
            <person name="Richardson P."/>
            <person name="Huber H."/>
            <person name="Kyrpides N.C."/>
        </authorList>
    </citation>
    <scope>NUCLEOTIDE SEQUENCE [LARGE SCALE GENOMIC DNA]</scope>
    <source>
        <strain>ATCC 43588 / DSM 3639 / JCM 9404 / F1</strain>
    </source>
</reference>
<sequence>MSKPFYVKFEVPPELAEKVYEAVKKARETGGKIKKGTNETTKAVERGIAKLVIIAEDVDPPEIVAHLPLLCDEKKIPYVYVPSKKRLGEAAGIEVAAASAAIIDPGGAKDLVEEIIKQVQELRAKAGA</sequence>
<keyword id="KW-0963">Cytoplasm</keyword>
<keyword id="KW-1185">Reference proteome</keyword>
<keyword id="KW-0687">Ribonucleoprotein</keyword>
<keyword id="KW-0689">Ribosomal protein</keyword>
<keyword id="KW-0694">RNA-binding</keyword>
<keyword id="KW-0699">rRNA-binding</keyword>
<keyword id="KW-0819">tRNA processing</keyword>
<proteinExistence type="inferred from homology"/>
<protein>
    <recommendedName>
        <fullName evidence="1">Large ribosomal subunit protein eL8</fullName>
    </recommendedName>
    <alternativeName>
        <fullName evidence="2">50S ribosomal protein L7Ae</fullName>
    </alternativeName>
    <alternativeName>
        <fullName evidence="1">Ribosomal protein L8e</fullName>
    </alternativeName>
</protein>
<feature type="chain" id="PRO_1000005033" description="Large ribosomal subunit protein eL8">
    <location>
        <begin position="1"/>
        <end position="128"/>
    </location>
</feature>
<accession>A3DMR6</accession>